<keyword id="KW-0929">Antimicrobial</keyword>
<keyword id="KW-1015">Disulfide bond</keyword>
<keyword id="KW-0872">Ion channel impairing toxin</keyword>
<keyword id="KW-0959">Myotoxin</keyword>
<keyword id="KW-0528">Neurotoxin</keyword>
<keyword id="KW-0632">Potassium channel impairing toxin</keyword>
<keyword id="KW-0964">Secreted</keyword>
<keyword id="KW-0732">Signal</keyword>
<keyword id="KW-0800">Toxin</keyword>
<keyword id="KW-1220">Voltage-gated potassium channel impairing toxin</keyword>
<accession>P24331</accession>
<organism>
    <name type="scientific">Crotalus durissus terrificus</name>
    <name type="common">South American rattlesnake</name>
    <dbReference type="NCBI Taxonomy" id="8732"/>
    <lineage>
        <taxon>Eukaryota</taxon>
        <taxon>Metazoa</taxon>
        <taxon>Chordata</taxon>
        <taxon>Craniata</taxon>
        <taxon>Vertebrata</taxon>
        <taxon>Euteleostomi</taxon>
        <taxon>Lepidosauria</taxon>
        <taxon>Squamata</taxon>
        <taxon>Bifurcata</taxon>
        <taxon>Unidentata</taxon>
        <taxon>Episquamata</taxon>
        <taxon>Toxicofera</taxon>
        <taxon>Serpentes</taxon>
        <taxon>Colubroidea</taxon>
        <taxon>Viperidae</taxon>
        <taxon>Crotalinae</taxon>
        <taxon>Crotalus</taxon>
    </lineage>
</organism>
<protein>
    <recommendedName>
        <fullName>Myotoxin-1</fullName>
    </recommendedName>
    <alternativeName>
        <fullName>Crotamine-1</fullName>
    </alternativeName>
</protein>
<proteinExistence type="inferred from homology"/>
<evidence type="ECO:0000250" key="1"/>
<evidence type="ECO:0000250" key="2">
    <source>
        <dbReference type="UniProtKB" id="Q9PWF3"/>
    </source>
</evidence>
<evidence type="ECO:0000305" key="3"/>
<evidence type="ECO:0000305" key="4">
    <source>
    </source>
</evidence>
<name>MYX1_CRODU</name>
<feature type="signal peptide" evidence="2">
    <location>
        <begin position="1"/>
        <end position="22"/>
    </location>
</feature>
<feature type="chain" id="PRO_0000035179" description="Myotoxin-1">
    <location>
        <begin position="23"/>
        <end position="64"/>
    </location>
</feature>
<feature type="disulfide bond" evidence="2">
    <location>
        <begin position="26"/>
        <end position="58"/>
    </location>
</feature>
<feature type="disulfide bond" evidence="2">
    <location>
        <begin position="33"/>
        <end position="52"/>
    </location>
</feature>
<feature type="disulfide bond" evidence="2">
    <location>
        <begin position="40"/>
        <end position="59"/>
    </location>
</feature>
<comment type="function">
    <text evidence="2">Cationic peptide that possesses multiple functions. It acts as a cell-penetrating peptide (CPP), and as a potent voltage-gated potassium channel (Kv) inhibitor. It exhibits antimicrobial activities, hind limb paralysis, and severe muscle necrosis by a non-enzymatic mechanism.</text>
</comment>
<comment type="subunit">
    <text evidence="1">Monomer.</text>
</comment>
<comment type="subcellular location">
    <subcellularLocation>
        <location evidence="4">Secreted</location>
    </subcellularLocation>
</comment>
<comment type="tissue specificity">
    <text evidence="4">Expressed by the venom gland.</text>
</comment>
<comment type="similarity">
    <text evidence="3">Belongs to the crotamine-myotoxin family.</text>
</comment>
<reference key="1">
    <citation type="journal article" date="1990" name="Toxicon">
        <title>Cloning and nucleotide sequences of crotamine genes.</title>
        <authorList>
            <person name="Smith L.A."/>
            <person name="Schmidt J.J."/>
        </authorList>
    </citation>
    <scope>NUCLEOTIDE SEQUENCE [MRNA]</scope>
    <source>
        <tissue>Venom gland</tissue>
    </source>
</reference>
<sequence length="65" mass="7443">MKILYLLFAFLFLAFLSEPGNAYKRCHIKGGHCFPKEKICIPPSSDFGKMDCPWRRKCCKKGSGK</sequence>
<dbReference type="PIR" id="A35947">
    <property type="entry name" value="A35947"/>
</dbReference>
<dbReference type="SMR" id="P24331"/>
<dbReference type="GO" id="GO:0005576">
    <property type="term" value="C:extracellular region"/>
    <property type="evidence" value="ECO:0007669"/>
    <property type="project" value="UniProtKB-SubCell"/>
</dbReference>
<dbReference type="GO" id="GO:0015459">
    <property type="term" value="F:potassium channel regulator activity"/>
    <property type="evidence" value="ECO:0007669"/>
    <property type="project" value="UniProtKB-KW"/>
</dbReference>
<dbReference type="GO" id="GO:0090729">
    <property type="term" value="F:toxin activity"/>
    <property type="evidence" value="ECO:0007669"/>
    <property type="project" value="UniProtKB-KW"/>
</dbReference>
<dbReference type="GO" id="GO:0044564">
    <property type="term" value="P:envenomation resulting in occlusion of the pore of voltage-gated potassium channel in another organism"/>
    <property type="evidence" value="ECO:0000250"/>
    <property type="project" value="UniProtKB"/>
</dbReference>
<dbReference type="FunFam" id="2.20.20.10:FF:000001">
    <property type="entry name" value="Crotamine"/>
    <property type="match status" value="1"/>
</dbReference>
<dbReference type="Gene3D" id="2.20.20.10">
    <property type="entry name" value="Anthopleurin-A"/>
    <property type="match status" value="1"/>
</dbReference>
<dbReference type="InterPro" id="IPR023355">
    <property type="entry name" value="Myo_ane_neurotoxin_sf"/>
</dbReference>
<dbReference type="InterPro" id="IPR000881">
    <property type="entry name" value="Myotoxin"/>
</dbReference>
<dbReference type="Pfam" id="PF00819">
    <property type="entry name" value="Myotoxins"/>
    <property type="match status" value="1"/>
</dbReference>
<dbReference type="PRINTS" id="PR00283">
    <property type="entry name" value="MYOTOXIN"/>
</dbReference>
<dbReference type="SUPFAM" id="SSF57392">
    <property type="entry name" value="Defensin-like"/>
    <property type="match status" value="1"/>
</dbReference>
<dbReference type="PROSITE" id="PS00459">
    <property type="entry name" value="MYOTOXINS_1"/>
    <property type="match status" value="1"/>
</dbReference>
<dbReference type="PROSITE" id="PS51345">
    <property type="entry name" value="MYOTOXINS_2"/>
    <property type="match status" value="1"/>
</dbReference>